<gene>
    <name type="primary">Bbs5</name>
</gene>
<evidence type="ECO:0000250" key="1"/>
<evidence type="ECO:0000250" key="2">
    <source>
        <dbReference type="UniProtKB" id="Q8N3I7"/>
    </source>
</evidence>
<evidence type="ECO:0000269" key="3">
    <source>
    </source>
</evidence>
<evidence type="ECO:0000269" key="4">
    <source>
    </source>
</evidence>
<evidence type="ECO:0000305" key="5"/>
<comment type="function">
    <text evidence="1">The BBSome complex is thought to function as a coat complex required for sorting of specific membrane proteins to the primary cilia. The BBSome complex is required for ciliogenesis but is dispensable for centriolar satellite function. This ciliogenic function is mediated in part by the Rab8 GDP/GTP exchange factor, which localizes to the basal body and contacts the BBSome. Rab8(GTP) enters the primary cilium and promotes extension of the ciliary membrane. Firstly the BBSome associates with the ciliary membrane and binds to RAB3IP/Rabin8, the guanosyl exchange factor (GEF) for Rab8 and then the Rab8-GTP localizes to the cilium and promotes docking and fusion of carrier vesicles to the base of the ciliary membrane. The BBSome complex, together with the LTZL1, controls SMO ciliary trafficking and contributes to the sonic hedgehog (SHH) pathway regulation. Required for BBSome complex ciliary localization but not for the proper complex assembly (By similarity).</text>
</comment>
<comment type="subunit">
    <text evidence="2 4">PPart of BBSome complex, that contains BBS1, BBS2, BBS4, BBS5, BBS7, BBS8/TTC8, BBS9 and BBIP10. Binds to phosphoinositides. Interacts with CCDC28B. Interacts with SMO; the interaction is indicative for the association of SMO with the BBsome complex to facilitate ciliary localization of SMO. Interacts with PKD1 (By similarity). Interacts with DLEC1 (By similarity).</text>
</comment>
<comment type="subcellular location">
    <subcellularLocation>
        <location evidence="1">Cell projection</location>
        <location evidence="1">Cilium membrane</location>
    </subcellularLocation>
    <subcellularLocation>
        <location evidence="1">Cytoplasm</location>
    </subcellularLocation>
    <subcellularLocation>
        <location evidence="3">Cytoplasm</location>
        <location evidence="3">Cytoskeleton</location>
        <location evidence="3">Cilium basal body</location>
    </subcellularLocation>
    <subcellularLocation>
        <location evidence="1">Cytoplasm</location>
        <location evidence="1">Cytoskeleton</location>
        <location evidence="1">Microtubule organizing center</location>
        <location evidence="1">Centrosome</location>
        <location evidence="1">Centriolar satellite</location>
    </subcellularLocation>
    <text>Localizes to basal bodies.</text>
</comment>
<comment type="similarity">
    <text evidence="5">Belongs to the BBS5 family.</text>
</comment>
<name>BBS5_MOUSE</name>
<dbReference type="EMBL" id="AK012283">
    <property type="protein sequence ID" value="BAB28141.1"/>
    <property type="molecule type" value="mRNA"/>
</dbReference>
<dbReference type="EMBL" id="AL929083">
    <property type="status" value="NOT_ANNOTATED_CDS"/>
    <property type="molecule type" value="Genomic_DNA"/>
</dbReference>
<dbReference type="EMBL" id="BC061031">
    <property type="protein sequence ID" value="AAH61031.1"/>
    <property type="molecule type" value="mRNA"/>
</dbReference>
<dbReference type="CCDS" id="CCDS16094.1"/>
<dbReference type="RefSeq" id="NP_082560.1">
    <property type="nucleotide sequence ID" value="NM_028284.3"/>
</dbReference>
<dbReference type="SMR" id="Q9CZQ9"/>
<dbReference type="BioGRID" id="215445">
    <property type="interactions" value="35"/>
</dbReference>
<dbReference type="ComplexPortal" id="CPX-1909">
    <property type="entry name" value="BBSome complex"/>
</dbReference>
<dbReference type="FunCoup" id="Q9CZQ9">
    <property type="interactions" value="264"/>
</dbReference>
<dbReference type="IntAct" id="Q9CZQ9">
    <property type="interactions" value="7"/>
</dbReference>
<dbReference type="MINT" id="Q9CZQ9"/>
<dbReference type="STRING" id="10090.ENSMUSP00000074494"/>
<dbReference type="PhosphoSitePlus" id="Q9CZQ9"/>
<dbReference type="PaxDb" id="10090-ENSMUSP00000074494"/>
<dbReference type="ProteomicsDB" id="277182"/>
<dbReference type="ABCD" id="Q9CZQ9">
    <property type="antibodies" value="1 sequenced antibody"/>
</dbReference>
<dbReference type="Antibodypedia" id="35007">
    <property type="antibodies" value="130 antibodies from 26 providers"/>
</dbReference>
<dbReference type="DNASU" id="72569"/>
<dbReference type="Ensembl" id="ENSMUST00000074963.9">
    <property type="protein sequence ID" value="ENSMUSP00000074494.3"/>
    <property type="gene ID" value="ENSMUSG00000063145.11"/>
</dbReference>
<dbReference type="GeneID" id="72569"/>
<dbReference type="KEGG" id="mmu:72569"/>
<dbReference type="UCSC" id="uc008jyf.1">
    <property type="organism name" value="mouse"/>
</dbReference>
<dbReference type="AGR" id="MGI:1919819"/>
<dbReference type="CTD" id="129880"/>
<dbReference type="MGI" id="MGI:1919819">
    <property type="gene designation" value="Bbs5"/>
</dbReference>
<dbReference type="VEuPathDB" id="HostDB:ENSMUSG00000063145"/>
<dbReference type="eggNOG" id="ENOG502QR2Z">
    <property type="taxonomic scope" value="Eukaryota"/>
</dbReference>
<dbReference type="GeneTree" id="ENSGT00390000002753"/>
<dbReference type="HOGENOM" id="CLU_052113_0_0_1"/>
<dbReference type="InParanoid" id="Q9CZQ9"/>
<dbReference type="OMA" id="PNFGIQY"/>
<dbReference type="OrthoDB" id="10261999at2759"/>
<dbReference type="PhylomeDB" id="Q9CZQ9"/>
<dbReference type="TreeFam" id="TF106129"/>
<dbReference type="Reactome" id="R-MMU-5620922">
    <property type="pathway name" value="BBSome-mediated cargo-targeting to cilium"/>
</dbReference>
<dbReference type="BioGRID-ORCS" id="72569">
    <property type="hits" value="3 hits in 76 CRISPR screens"/>
</dbReference>
<dbReference type="PRO" id="PR:Q9CZQ9"/>
<dbReference type="Proteomes" id="UP000000589">
    <property type="component" value="Chromosome 2"/>
</dbReference>
<dbReference type="RNAct" id="Q9CZQ9">
    <property type="molecule type" value="protein"/>
</dbReference>
<dbReference type="Bgee" id="ENSMUSG00000063145">
    <property type="expression patterns" value="Expressed in spermatid and 214 other cell types or tissues"/>
</dbReference>
<dbReference type="ExpressionAtlas" id="Q9CZQ9">
    <property type="expression patterns" value="baseline and differential"/>
</dbReference>
<dbReference type="GO" id="GO:0005930">
    <property type="term" value="C:axoneme"/>
    <property type="evidence" value="ECO:0000314"/>
    <property type="project" value="MGI"/>
</dbReference>
<dbReference type="GO" id="GO:0034464">
    <property type="term" value="C:BBSome"/>
    <property type="evidence" value="ECO:0000314"/>
    <property type="project" value="UniProtKB"/>
</dbReference>
<dbReference type="GO" id="GO:0034451">
    <property type="term" value="C:centriolar satellite"/>
    <property type="evidence" value="ECO:0000314"/>
    <property type="project" value="MGI"/>
</dbReference>
<dbReference type="GO" id="GO:0036064">
    <property type="term" value="C:ciliary basal body"/>
    <property type="evidence" value="ECO:0000314"/>
    <property type="project" value="BHF-UCL"/>
</dbReference>
<dbReference type="GO" id="GO:0060170">
    <property type="term" value="C:ciliary membrane"/>
    <property type="evidence" value="ECO:0000266"/>
    <property type="project" value="ComplexPortal"/>
</dbReference>
<dbReference type="GO" id="GO:0005929">
    <property type="term" value="C:cilium"/>
    <property type="evidence" value="ECO:0000314"/>
    <property type="project" value="MGI"/>
</dbReference>
<dbReference type="GO" id="GO:0032266">
    <property type="term" value="F:phosphatidylinositol-3-phosphate binding"/>
    <property type="evidence" value="ECO:0007669"/>
    <property type="project" value="Ensembl"/>
</dbReference>
<dbReference type="GO" id="GO:0061629">
    <property type="term" value="F:RNA polymerase II-specific DNA-binding transcription factor binding"/>
    <property type="evidence" value="ECO:0000266"/>
    <property type="project" value="MGI"/>
</dbReference>
<dbReference type="GO" id="GO:0060271">
    <property type="term" value="P:cilium assembly"/>
    <property type="evidence" value="ECO:0000303"/>
    <property type="project" value="ComplexPortal"/>
</dbReference>
<dbReference type="GO" id="GO:0015031">
    <property type="term" value="P:protein transport"/>
    <property type="evidence" value="ECO:0007669"/>
    <property type="project" value="UniProtKB-KW"/>
</dbReference>
<dbReference type="CDD" id="cd00900">
    <property type="entry name" value="PH-like"/>
    <property type="match status" value="1"/>
</dbReference>
<dbReference type="FunFam" id="2.30.29.30:FF:000232">
    <property type="entry name" value="Bardet-Biedl syndrome 5 isoform 1"/>
    <property type="match status" value="1"/>
</dbReference>
<dbReference type="Gene3D" id="2.30.29.30">
    <property type="entry name" value="Pleckstrin-homology domain (PH domain)/Phosphotyrosine-binding domain (PTB)"/>
    <property type="match status" value="1"/>
</dbReference>
<dbReference type="InterPro" id="IPR006606">
    <property type="entry name" value="BBL5"/>
</dbReference>
<dbReference type="InterPro" id="IPR030804">
    <property type="entry name" value="BBS5/fem-3"/>
</dbReference>
<dbReference type="InterPro" id="IPR014003">
    <property type="entry name" value="BBS5_PH"/>
</dbReference>
<dbReference type="InterPro" id="IPR011993">
    <property type="entry name" value="PH-like_dom_sf"/>
</dbReference>
<dbReference type="PANTHER" id="PTHR21351:SF0">
    <property type="entry name" value="BARDET-BIEDL SYNDROME 5 PROTEIN"/>
    <property type="match status" value="1"/>
</dbReference>
<dbReference type="PANTHER" id="PTHR21351">
    <property type="entry name" value="BARDET-BIEDL SYNDROME PROTEIN 5"/>
    <property type="match status" value="1"/>
</dbReference>
<dbReference type="Pfam" id="PF07289">
    <property type="entry name" value="BBL5"/>
    <property type="match status" value="1"/>
</dbReference>
<dbReference type="PIRSF" id="PIRSF010072">
    <property type="entry name" value="DUF1448"/>
    <property type="match status" value="1"/>
</dbReference>
<dbReference type="SMART" id="SM00683">
    <property type="entry name" value="DM16"/>
    <property type="match status" value="2"/>
</dbReference>
<protein>
    <recommendedName>
        <fullName evidence="5">BBSome complex member BBS5</fullName>
    </recommendedName>
    <alternativeName>
        <fullName>Bardet-Biedl syndrome 5 protein homolog</fullName>
    </alternativeName>
</protein>
<feature type="chain" id="PRO_0000223256" description="BBSome complex member BBS5">
    <location>
        <begin position="1"/>
        <end position="341"/>
    </location>
</feature>
<accession>Q9CZQ9</accession>
<accession>A2AUC7</accession>
<keyword id="KW-1003">Cell membrane</keyword>
<keyword id="KW-0966">Cell projection</keyword>
<keyword id="KW-0969">Cilium</keyword>
<keyword id="KW-0970">Cilium biogenesis/degradation</keyword>
<keyword id="KW-0963">Cytoplasm</keyword>
<keyword id="KW-0206">Cytoskeleton</keyword>
<keyword id="KW-0472">Membrane</keyword>
<keyword id="KW-0653">Protein transport</keyword>
<keyword id="KW-1185">Reference proteome</keyword>
<keyword id="KW-0813">Transport</keyword>
<reference key="1">
    <citation type="journal article" date="2005" name="Science">
        <title>The transcriptional landscape of the mammalian genome.</title>
        <authorList>
            <person name="Carninci P."/>
            <person name="Kasukawa T."/>
            <person name="Katayama S."/>
            <person name="Gough J."/>
            <person name="Frith M.C."/>
            <person name="Maeda N."/>
            <person name="Oyama R."/>
            <person name="Ravasi T."/>
            <person name="Lenhard B."/>
            <person name="Wells C."/>
            <person name="Kodzius R."/>
            <person name="Shimokawa K."/>
            <person name="Bajic V.B."/>
            <person name="Brenner S.E."/>
            <person name="Batalov S."/>
            <person name="Forrest A.R."/>
            <person name="Zavolan M."/>
            <person name="Davis M.J."/>
            <person name="Wilming L.G."/>
            <person name="Aidinis V."/>
            <person name="Allen J.E."/>
            <person name="Ambesi-Impiombato A."/>
            <person name="Apweiler R."/>
            <person name="Aturaliya R.N."/>
            <person name="Bailey T.L."/>
            <person name="Bansal M."/>
            <person name="Baxter L."/>
            <person name="Beisel K.W."/>
            <person name="Bersano T."/>
            <person name="Bono H."/>
            <person name="Chalk A.M."/>
            <person name="Chiu K.P."/>
            <person name="Choudhary V."/>
            <person name="Christoffels A."/>
            <person name="Clutterbuck D.R."/>
            <person name="Crowe M.L."/>
            <person name="Dalla E."/>
            <person name="Dalrymple B.P."/>
            <person name="de Bono B."/>
            <person name="Della Gatta G."/>
            <person name="di Bernardo D."/>
            <person name="Down T."/>
            <person name="Engstrom P."/>
            <person name="Fagiolini M."/>
            <person name="Faulkner G."/>
            <person name="Fletcher C.F."/>
            <person name="Fukushima T."/>
            <person name="Furuno M."/>
            <person name="Futaki S."/>
            <person name="Gariboldi M."/>
            <person name="Georgii-Hemming P."/>
            <person name="Gingeras T.R."/>
            <person name="Gojobori T."/>
            <person name="Green R.E."/>
            <person name="Gustincich S."/>
            <person name="Harbers M."/>
            <person name="Hayashi Y."/>
            <person name="Hensch T.K."/>
            <person name="Hirokawa N."/>
            <person name="Hill D."/>
            <person name="Huminiecki L."/>
            <person name="Iacono M."/>
            <person name="Ikeo K."/>
            <person name="Iwama A."/>
            <person name="Ishikawa T."/>
            <person name="Jakt M."/>
            <person name="Kanapin A."/>
            <person name="Katoh M."/>
            <person name="Kawasawa Y."/>
            <person name="Kelso J."/>
            <person name="Kitamura H."/>
            <person name="Kitano H."/>
            <person name="Kollias G."/>
            <person name="Krishnan S.P."/>
            <person name="Kruger A."/>
            <person name="Kummerfeld S.K."/>
            <person name="Kurochkin I.V."/>
            <person name="Lareau L.F."/>
            <person name="Lazarevic D."/>
            <person name="Lipovich L."/>
            <person name="Liu J."/>
            <person name="Liuni S."/>
            <person name="McWilliam S."/>
            <person name="Madan Babu M."/>
            <person name="Madera M."/>
            <person name="Marchionni L."/>
            <person name="Matsuda H."/>
            <person name="Matsuzawa S."/>
            <person name="Miki H."/>
            <person name="Mignone F."/>
            <person name="Miyake S."/>
            <person name="Morris K."/>
            <person name="Mottagui-Tabar S."/>
            <person name="Mulder N."/>
            <person name="Nakano N."/>
            <person name="Nakauchi H."/>
            <person name="Ng P."/>
            <person name="Nilsson R."/>
            <person name="Nishiguchi S."/>
            <person name="Nishikawa S."/>
            <person name="Nori F."/>
            <person name="Ohara O."/>
            <person name="Okazaki Y."/>
            <person name="Orlando V."/>
            <person name="Pang K.C."/>
            <person name="Pavan W.J."/>
            <person name="Pavesi G."/>
            <person name="Pesole G."/>
            <person name="Petrovsky N."/>
            <person name="Piazza S."/>
            <person name="Reed J."/>
            <person name="Reid J.F."/>
            <person name="Ring B.Z."/>
            <person name="Ringwald M."/>
            <person name="Rost B."/>
            <person name="Ruan Y."/>
            <person name="Salzberg S.L."/>
            <person name="Sandelin A."/>
            <person name="Schneider C."/>
            <person name="Schoenbach C."/>
            <person name="Sekiguchi K."/>
            <person name="Semple C.A."/>
            <person name="Seno S."/>
            <person name="Sessa L."/>
            <person name="Sheng Y."/>
            <person name="Shibata Y."/>
            <person name="Shimada H."/>
            <person name="Shimada K."/>
            <person name="Silva D."/>
            <person name="Sinclair B."/>
            <person name="Sperling S."/>
            <person name="Stupka E."/>
            <person name="Sugiura K."/>
            <person name="Sultana R."/>
            <person name="Takenaka Y."/>
            <person name="Taki K."/>
            <person name="Tammoja K."/>
            <person name="Tan S.L."/>
            <person name="Tang S."/>
            <person name="Taylor M.S."/>
            <person name="Tegner J."/>
            <person name="Teichmann S.A."/>
            <person name="Ueda H.R."/>
            <person name="van Nimwegen E."/>
            <person name="Verardo R."/>
            <person name="Wei C.L."/>
            <person name="Yagi K."/>
            <person name="Yamanishi H."/>
            <person name="Zabarovsky E."/>
            <person name="Zhu S."/>
            <person name="Zimmer A."/>
            <person name="Hide W."/>
            <person name="Bult C."/>
            <person name="Grimmond S.M."/>
            <person name="Teasdale R.D."/>
            <person name="Liu E.T."/>
            <person name="Brusic V."/>
            <person name="Quackenbush J."/>
            <person name="Wahlestedt C."/>
            <person name="Mattick J.S."/>
            <person name="Hume D.A."/>
            <person name="Kai C."/>
            <person name="Sasaki D."/>
            <person name="Tomaru Y."/>
            <person name="Fukuda S."/>
            <person name="Kanamori-Katayama M."/>
            <person name="Suzuki M."/>
            <person name="Aoki J."/>
            <person name="Arakawa T."/>
            <person name="Iida J."/>
            <person name="Imamura K."/>
            <person name="Itoh M."/>
            <person name="Kato T."/>
            <person name="Kawaji H."/>
            <person name="Kawagashira N."/>
            <person name="Kawashima T."/>
            <person name="Kojima M."/>
            <person name="Kondo S."/>
            <person name="Konno H."/>
            <person name="Nakano K."/>
            <person name="Ninomiya N."/>
            <person name="Nishio T."/>
            <person name="Okada M."/>
            <person name="Plessy C."/>
            <person name="Shibata K."/>
            <person name="Shiraki T."/>
            <person name="Suzuki S."/>
            <person name="Tagami M."/>
            <person name="Waki K."/>
            <person name="Watahiki A."/>
            <person name="Okamura-Oho Y."/>
            <person name="Suzuki H."/>
            <person name="Kawai J."/>
            <person name="Hayashizaki Y."/>
        </authorList>
    </citation>
    <scope>NUCLEOTIDE SEQUENCE [LARGE SCALE MRNA]</scope>
    <source>
        <strain>C57BL/6J</strain>
        <tissue>Embryo</tissue>
    </source>
</reference>
<reference key="2">
    <citation type="journal article" date="2009" name="PLoS Biol.">
        <title>Lineage-specific biology revealed by a finished genome assembly of the mouse.</title>
        <authorList>
            <person name="Church D.M."/>
            <person name="Goodstadt L."/>
            <person name="Hillier L.W."/>
            <person name="Zody M.C."/>
            <person name="Goldstein S."/>
            <person name="She X."/>
            <person name="Bult C.J."/>
            <person name="Agarwala R."/>
            <person name="Cherry J.L."/>
            <person name="DiCuccio M."/>
            <person name="Hlavina W."/>
            <person name="Kapustin Y."/>
            <person name="Meric P."/>
            <person name="Maglott D."/>
            <person name="Birtle Z."/>
            <person name="Marques A.C."/>
            <person name="Graves T."/>
            <person name="Zhou S."/>
            <person name="Teague B."/>
            <person name="Potamousis K."/>
            <person name="Churas C."/>
            <person name="Place M."/>
            <person name="Herschleb J."/>
            <person name="Runnheim R."/>
            <person name="Forrest D."/>
            <person name="Amos-Landgraf J."/>
            <person name="Schwartz D.C."/>
            <person name="Cheng Z."/>
            <person name="Lindblad-Toh K."/>
            <person name="Eichler E.E."/>
            <person name="Ponting C.P."/>
        </authorList>
    </citation>
    <scope>NUCLEOTIDE SEQUENCE [LARGE SCALE GENOMIC DNA]</scope>
    <source>
        <strain>C57BL/6J</strain>
    </source>
</reference>
<reference key="3">
    <citation type="journal article" date="2004" name="Genome Res.">
        <title>The status, quality, and expansion of the NIH full-length cDNA project: the Mammalian Gene Collection (MGC).</title>
        <authorList>
            <consortium name="The MGC Project Team"/>
        </authorList>
    </citation>
    <scope>NUCLEOTIDE SEQUENCE [LARGE SCALE MRNA]</scope>
    <source>
        <tissue>Testis</tissue>
    </source>
</reference>
<reference key="4">
    <citation type="journal article" date="2004" name="Cell">
        <title>Comparative genomics identifies a flagellar and basal body proteome that includes the BBS5 human disease gene.</title>
        <authorList>
            <person name="Li J.B."/>
            <person name="Gerdes J.M."/>
            <person name="Haycraft C.J."/>
            <person name="Fan Y."/>
            <person name="Teslovich T.M."/>
            <person name="May-Simera H."/>
            <person name="Li H."/>
            <person name="Blacque O.E."/>
            <person name="Li L."/>
            <person name="Leitch C.C."/>
            <person name="Lewis R.A."/>
            <person name="Green J.S."/>
            <person name="Parfrey P.S."/>
            <person name="Leroux M.R."/>
            <person name="Davidson W.S."/>
            <person name="Beales P.L."/>
            <person name="Guay-Woodford L.M."/>
            <person name="Yoder B.K."/>
            <person name="Stormo G.D."/>
            <person name="Katsanis N."/>
            <person name="Dutcher S.K."/>
        </authorList>
    </citation>
    <scope>SUBCELLULAR LOCATION</scope>
</reference>
<reference key="5">
    <citation type="journal article" date="2010" name="Cell">
        <title>A tissue-specific atlas of mouse protein phosphorylation and expression.</title>
        <authorList>
            <person name="Huttlin E.L."/>
            <person name="Jedrychowski M.P."/>
            <person name="Elias J.E."/>
            <person name="Goswami T."/>
            <person name="Rad R."/>
            <person name="Beausoleil S.A."/>
            <person name="Villen J."/>
            <person name="Haas W."/>
            <person name="Sowa M.E."/>
            <person name="Gygi S.P."/>
        </authorList>
    </citation>
    <scope>IDENTIFICATION BY MASS SPECTROMETRY [LARGE SCALE ANALYSIS]</scope>
    <source>
        <tissue>Testis</tissue>
    </source>
</reference>
<reference key="6">
    <citation type="journal article" date="2011" name="PLoS Genet.">
        <title>A novel protein LZTFL1 regulates ciliary trafficking of the BBSome and Smoothened.</title>
        <authorList>
            <person name="Seo S."/>
            <person name="Zhang Q."/>
            <person name="Bugge K."/>
            <person name="Breslow D.K."/>
            <person name="Searby C.C."/>
            <person name="Nachury M.V."/>
            <person name="Sheffield V.C."/>
        </authorList>
    </citation>
    <scope>IDENTIFICATION IN THE BBSOME COMPLEX</scope>
    <scope>INTERACTION WITH SMO</scope>
</reference>
<sequence length="341" mass="38862">MSVLDVLWEDRDVRFDVSSQQMKTRPGEVLIDCLDSIEDTKGNNGDRGRLLVTNLRIIWHSLALPRVNLSIGYNCILNITTRTANSKLRGQTEALYILTKCNTTRFEFIFTNLVPGSPRLFTSVIAVHRAYETSKMYRDFKLRSAVIQNKQLRLLPQEHVYDKINGVWNLSSDQGNLGTFFITNVRIVWHANMNDSFNVSIPYLQIRSIKIRDSKFGLALVIESSQQSGGYVLGFKIDPVEKLQESVKEINSLHKVYSASPIFGVNYEMEEKPQPLEALTVEQIQDDVEIDSDDHTDAFVAYFADGNKQQDREPVFSEELGLAIEKLKDGFTLQGLWEVMS</sequence>
<organism>
    <name type="scientific">Mus musculus</name>
    <name type="common">Mouse</name>
    <dbReference type="NCBI Taxonomy" id="10090"/>
    <lineage>
        <taxon>Eukaryota</taxon>
        <taxon>Metazoa</taxon>
        <taxon>Chordata</taxon>
        <taxon>Craniata</taxon>
        <taxon>Vertebrata</taxon>
        <taxon>Euteleostomi</taxon>
        <taxon>Mammalia</taxon>
        <taxon>Eutheria</taxon>
        <taxon>Euarchontoglires</taxon>
        <taxon>Glires</taxon>
        <taxon>Rodentia</taxon>
        <taxon>Myomorpha</taxon>
        <taxon>Muroidea</taxon>
        <taxon>Muridae</taxon>
        <taxon>Murinae</taxon>
        <taxon>Mus</taxon>
        <taxon>Mus</taxon>
    </lineage>
</organism>
<proteinExistence type="evidence at protein level"/>